<name>METK_STAAT</name>
<protein>
    <recommendedName>
        <fullName evidence="1">S-adenosylmethionine synthase</fullName>
        <shortName evidence="1">AdoMet synthase</shortName>
        <ecNumber evidence="1">2.5.1.6</ecNumber>
    </recommendedName>
    <alternativeName>
        <fullName evidence="1">MAT</fullName>
    </alternativeName>
    <alternativeName>
        <fullName evidence="1">Methionine adenosyltransferase</fullName>
    </alternativeName>
</protein>
<comment type="function">
    <text evidence="1">Catalyzes the formation of S-adenosylmethionine (AdoMet) from methionine and ATP. The overall synthetic reaction is composed of two sequential steps, AdoMet formation and the subsequent tripolyphosphate hydrolysis which occurs prior to release of AdoMet from the enzyme.</text>
</comment>
<comment type="catalytic activity">
    <reaction evidence="1">
        <text>L-methionine + ATP + H2O = S-adenosyl-L-methionine + phosphate + diphosphate</text>
        <dbReference type="Rhea" id="RHEA:21080"/>
        <dbReference type="ChEBI" id="CHEBI:15377"/>
        <dbReference type="ChEBI" id="CHEBI:30616"/>
        <dbReference type="ChEBI" id="CHEBI:33019"/>
        <dbReference type="ChEBI" id="CHEBI:43474"/>
        <dbReference type="ChEBI" id="CHEBI:57844"/>
        <dbReference type="ChEBI" id="CHEBI:59789"/>
        <dbReference type="EC" id="2.5.1.6"/>
    </reaction>
</comment>
<comment type="cofactor">
    <cofactor evidence="1">
        <name>Mg(2+)</name>
        <dbReference type="ChEBI" id="CHEBI:18420"/>
    </cofactor>
    <text evidence="1">Binds 2 divalent ions per subunit.</text>
</comment>
<comment type="cofactor">
    <cofactor evidence="1">
        <name>K(+)</name>
        <dbReference type="ChEBI" id="CHEBI:29103"/>
    </cofactor>
    <text evidence="1">Binds 1 potassium ion per subunit.</text>
</comment>
<comment type="pathway">
    <text evidence="1">Amino-acid biosynthesis; S-adenosyl-L-methionine biosynthesis; S-adenosyl-L-methionine from L-methionine: step 1/1.</text>
</comment>
<comment type="subunit">
    <text evidence="1">Homotetramer; dimer of dimers.</text>
</comment>
<comment type="subcellular location">
    <subcellularLocation>
        <location evidence="1">Cytoplasm</location>
    </subcellularLocation>
</comment>
<comment type="similarity">
    <text evidence="1">Belongs to the AdoMet synthase family.</text>
</comment>
<dbReference type="EC" id="2.5.1.6" evidence="1"/>
<dbReference type="EMBL" id="CP000730">
    <property type="protein sequence ID" value="ABX29782.1"/>
    <property type="molecule type" value="Genomic_DNA"/>
</dbReference>
<dbReference type="RefSeq" id="WP_000933822.1">
    <property type="nucleotide sequence ID" value="NC_010079.1"/>
</dbReference>
<dbReference type="SMR" id="A8Z4L2"/>
<dbReference type="KEGG" id="sax:USA300HOU_1777"/>
<dbReference type="HOGENOM" id="CLU_041802_1_1_9"/>
<dbReference type="UniPathway" id="UPA00315">
    <property type="reaction ID" value="UER00080"/>
</dbReference>
<dbReference type="GO" id="GO:0005737">
    <property type="term" value="C:cytoplasm"/>
    <property type="evidence" value="ECO:0007669"/>
    <property type="project" value="UniProtKB-SubCell"/>
</dbReference>
<dbReference type="GO" id="GO:0005524">
    <property type="term" value="F:ATP binding"/>
    <property type="evidence" value="ECO:0007669"/>
    <property type="project" value="UniProtKB-UniRule"/>
</dbReference>
<dbReference type="GO" id="GO:0000287">
    <property type="term" value="F:magnesium ion binding"/>
    <property type="evidence" value="ECO:0007669"/>
    <property type="project" value="UniProtKB-UniRule"/>
</dbReference>
<dbReference type="GO" id="GO:0004478">
    <property type="term" value="F:methionine adenosyltransferase activity"/>
    <property type="evidence" value="ECO:0007669"/>
    <property type="project" value="UniProtKB-UniRule"/>
</dbReference>
<dbReference type="GO" id="GO:0006730">
    <property type="term" value="P:one-carbon metabolic process"/>
    <property type="evidence" value="ECO:0007669"/>
    <property type="project" value="UniProtKB-KW"/>
</dbReference>
<dbReference type="GO" id="GO:0006556">
    <property type="term" value="P:S-adenosylmethionine biosynthetic process"/>
    <property type="evidence" value="ECO:0007669"/>
    <property type="project" value="UniProtKB-UniRule"/>
</dbReference>
<dbReference type="CDD" id="cd18079">
    <property type="entry name" value="S-AdoMet_synt"/>
    <property type="match status" value="1"/>
</dbReference>
<dbReference type="FunFam" id="3.30.300.10:FF:000003">
    <property type="entry name" value="S-adenosylmethionine synthase"/>
    <property type="match status" value="1"/>
</dbReference>
<dbReference type="FunFam" id="3.30.300.10:FF:000004">
    <property type="entry name" value="S-adenosylmethionine synthase"/>
    <property type="match status" value="1"/>
</dbReference>
<dbReference type="Gene3D" id="3.30.300.10">
    <property type="match status" value="3"/>
</dbReference>
<dbReference type="HAMAP" id="MF_00086">
    <property type="entry name" value="S_AdoMet_synth1"/>
    <property type="match status" value="1"/>
</dbReference>
<dbReference type="InterPro" id="IPR022631">
    <property type="entry name" value="ADOMET_SYNTHASE_CS"/>
</dbReference>
<dbReference type="InterPro" id="IPR022630">
    <property type="entry name" value="S-AdoMet_synt_C"/>
</dbReference>
<dbReference type="InterPro" id="IPR022629">
    <property type="entry name" value="S-AdoMet_synt_central"/>
</dbReference>
<dbReference type="InterPro" id="IPR022628">
    <property type="entry name" value="S-AdoMet_synt_N"/>
</dbReference>
<dbReference type="InterPro" id="IPR002133">
    <property type="entry name" value="S-AdoMet_synthetase"/>
</dbReference>
<dbReference type="InterPro" id="IPR022636">
    <property type="entry name" value="S-AdoMet_synthetase_sfam"/>
</dbReference>
<dbReference type="NCBIfam" id="TIGR01034">
    <property type="entry name" value="metK"/>
    <property type="match status" value="1"/>
</dbReference>
<dbReference type="PANTHER" id="PTHR11964">
    <property type="entry name" value="S-ADENOSYLMETHIONINE SYNTHETASE"/>
    <property type="match status" value="1"/>
</dbReference>
<dbReference type="Pfam" id="PF02773">
    <property type="entry name" value="S-AdoMet_synt_C"/>
    <property type="match status" value="1"/>
</dbReference>
<dbReference type="Pfam" id="PF02772">
    <property type="entry name" value="S-AdoMet_synt_M"/>
    <property type="match status" value="1"/>
</dbReference>
<dbReference type="Pfam" id="PF00438">
    <property type="entry name" value="S-AdoMet_synt_N"/>
    <property type="match status" value="1"/>
</dbReference>
<dbReference type="PIRSF" id="PIRSF000497">
    <property type="entry name" value="MAT"/>
    <property type="match status" value="1"/>
</dbReference>
<dbReference type="SUPFAM" id="SSF55973">
    <property type="entry name" value="S-adenosylmethionine synthetase"/>
    <property type="match status" value="3"/>
</dbReference>
<dbReference type="PROSITE" id="PS00376">
    <property type="entry name" value="ADOMET_SYNTHASE_1"/>
    <property type="match status" value="1"/>
</dbReference>
<dbReference type="PROSITE" id="PS00377">
    <property type="entry name" value="ADOMET_SYNTHASE_2"/>
    <property type="match status" value="1"/>
</dbReference>
<feature type="chain" id="PRO_1000075398" description="S-adenosylmethionine synthase">
    <location>
        <begin position="1"/>
        <end position="397"/>
    </location>
</feature>
<feature type="region of interest" description="Flexible loop" evidence="1">
    <location>
        <begin position="101"/>
        <end position="111"/>
    </location>
</feature>
<feature type="binding site" description="in other chain" evidence="1">
    <location>
        <position position="17"/>
    </location>
    <ligand>
        <name>ATP</name>
        <dbReference type="ChEBI" id="CHEBI:30616"/>
        <note>ligand shared between two neighboring subunits</note>
    </ligand>
</feature>
<feature type="binding site" evidence="1">
    <location>
        <position position="19"/>
    </location>
    <ligand>
        <name>Mg(2+)</name>
        <dbReference type="ChEBI" id="CHEBI:18420"/>
    </ligand>
</feature>
<feature type="binding site" evidence="1">
    <location>
        <position position="45"/>
    </location>
    <ligand>
        <name>K(+)</name>
        <dbReference type="ChEBI" id="CHEBI:29103"/>
    </ligand>
</feature>
<feature type="binding site" description="in other chain" evidence="1">
    <location>
        <position position="58"/>
    </location>
    <ligand>
        <name>L-methionine</name>
        <dbReference type="ChEBI" id="CHEBI:57844"/>
        <note>ligand shared between two neighboring subunits</note>
    </ligand>
</feature>
<feature type="binding site" description="in other chain" evidence="1">
    <location>
        <position position="101"/>
    </location>
    <ligand>
        <name>L-methionine</name>
        <dbReference type="ChEBI" id="CHEBI:57844"/>
        <note>ligand shared between two neighboring subunits</note>
    </ligand>
</feature>
<feature type="binding site" description="in other chain" evidence="1">
    <location>
        <begin position="176"/>
        <end position="178"/>
    </location>
    <ligand>
        <name>ATP</name>
        <dbReference type="ChEBI" id="CHEBI:30616"/>
        <note>ligand shared between two neighboring subunits</note>
    </ligand>
</feature>
<feature type="binding site" description="in other chain" evidence="1">
    <location>
        <begin position="243"/>
        <end position="244"/>
    </location>
    <ligand>
        <name>ATP</name>
        <dbReference type="ChEBI" id="CHEBI:30616"/>
        <note>ligand shared between two neighboring subunits</note>
    </ligand>
</feature>
<feature type="binding site" evidence="1">
    <location>
        <position position="252"/>
    </location>
    <ligand>
        <name>ATP</name>
        <dbReference type="ChEBI" id="CHEBI:30616"/>
        <note>ligand shared between two neighboring subunits</note>
    </ligand>
</feature>
<feature type="binding site" evidence="1">
    <location>
        <position position="252"/>
    </location>
    <ligand>
        <name>L-methionine</name>
        <dbReference type="ChEBI" id="CHEBI:57844"/>
        <note>ligand shared between two neighboring subunits</note>
    </ligand>
</feature>
<feature type="binding site" description="in other chain" evidence="1">
    <location>
        <begin position="258"/>
        <end position="259"/>
    </location>
    <ligand>
        <name>ATP</name>
        <dbReference type="ChEBI" id="CHEBI:30616"/>
        <note>ligand shared between two neighboring subunits</note>
    </ligand>
</feature>
<feature type="binding site" evidence="1">
    <location>
        <position position="279"/>
    </location>
    <ligand>
        <name>ATP</name>
        <dbReference type="ChEBI" id="CHEBI:30616"/>
        <note>ligand shared between two neighboring subunits</note>
    </ligand>
</feature>
<feature type="binding site" description="in other chain" evidence="1">
    <location>
        <position position="283"/>
    </location>
    <ligand>
        <name>L-methionine</name>
        <dbReference type="ChEBI" id="CHEBI:57844"/>
        <note>ligand shared between two neighboring subunits</note>
    </ligand>
</feature>
<organism>
    <name type="scientific">Staphylococcus aureus (strain USA300 / TCH1516)</name>
    <dbReference type="NCBI Taxonomy" id="451516"/>
    <lineage>
        <taxon>Bacteria</taxon>
        <taxon>Bacillati</taxon>
        <taxon>Bacillota</taxon>
        <taxon>Bacilli</taxon>
        <taxon>Bacillales</taxon>
        <taxon>Staphylococcaceae</taxon>
        <taxon>Staphylococcus</taxon>
    </lineage>
</organism>
<sequence length="397" mass="43641">MLNNKRLFTSESVTEGHPDKIADQVSDAILDAILKDDPNARVACETTVTTGMALIAGEISTTTYVDIPKVVRETIKEIGYTRAKYGYDYETMAILTAIDEQSPDIAQGVDKALEYRDKDSEEEIEATGAGDQGLMFGYATNETETYMPLAIYLSHQLAKRLSDVRKDGTLNYLRPDGKVQVTVEYDENDNPVRIDTIVVSTQHAEDVTLEQIQEDIKAHVIYPTVPENLINEQTKFYINPTGRFVIGGPQGDAGLTGRKIIVDTYGGYARHGGGCFSGKDPTKVDRSAAYAARYVAKNIVAAGLADQCEVQLAYAIGVAEPVSIAIDTFGTGKVSEGQLVEAVRKHFDLRPAGIIKMLDLKQPIYKQTAAYGHFGRTDVLFPWEKLDKVEELKDAVK</sequence>
<gene>
    <name evidence="1" type="primary">metK</name>
    <name type="ordered locus">USA300HOU_1777</name>
</gene>
<keyword id="KW-0067">ATP-binding</keyword>
<keyword id="KW-0963">Cytoplasm</keyword>
<keyword id="KW-0460">Magnesium</keyword>
<keyword id="KW-0479">Metal-binding</keyword>
<keyword id="KW-0547">Nucleotide-binding</keyword>
<keyword id="KW-0554">One-carbon metabolism</keyword>
<keyword id="KW-0630">Potassium</keyword>
<keyword id="KW-0808">Transferase</keyword>
<accession>A8Z4L2</accession>
<reference key="1">
    <citation type="journal article" date="2007" name="BMC Microbiol.">
        <title>Subtle genetic changes enhance virulence of methicillin resistant and sensitive Staphylococcus aureus.</title>
        <authorList>
            <person name="Highlander S.K."/>
            <person name="Hulten K.G."/>
            <person name="Qin X."/>
            <person name="Jiang H."/>
            <person name="Yerrapragada S."/>
            <person name="Mason E.O. Jr."/>
            <person name="Shang Y."/>
            <person name="Williams T.M."/>
            <person name="Fortunov R.M."/>
            <person name="Liu Y."/>
            <person name="Igboeli O."/>
            <person name="Petrosino J."/>
            <person name="Tirumalai M."/>
            <person name="Uzman A."/>
            <person name="Fox G.E."/>
            <person name="Cardenas A.M."/>
            <person name="Muzny D.M."/>
            <person name="Hemphill L."/>
            <person name="Ding Y."/>
            <person name="Dugan S."/>
            <person name="Blyth P.R."/>
            <person name="Buhay C.J."/>
            <person name="Dinh H.H."/>
            <person name="Hawes A.C."/>
            <person name="Holder M."/>
            <person name="Kovar C.L."/>
            <person name="Lee S.L."/>
            <person name="Liu W."/>
            <person name="Nazareth L.V."/>
            <person name="Wang Q."/>
            <person name="Zhou J."/>
            <person name="Kaplan S.L."/>
            <person name="Weinstock G.M."/>
        </authorList>
    </citation>
    <scope>NUCLEOTIDE SEQUENCE [LARGE SCALE GENOMIC DNA]</scope>
    <source>
        <strain>USA300 / TCH1516</strain>
    </source>
</reference>
<proteinExistence type="inferred from homology"/>
<evidence type="ECO:0000255" key="1">
    <source>
        <dbReference type="HAMAP-Rule" id="MF_00086"/>
    </source>
</evidence>